<organism>
    <name type="scientific">Salmonella paratyphi B (strain ATCC BAA-1250 / SPB7)</name>
    <dbReference type="NCBI Taxonomy" id="1016998"/>
    <lineage>
        <taxon>Bacteria</taxon>
        <taxon>Pseudomonadati</taxon>
        <taxon>Pseudomonadota</taxon>
        <taxon>Gammaproteobacteria</taxon>
        <taxon>Enterobacterales</taxon>
        <taxon>Enterobacteriaceae</taxon>
        <taxon>Salmonella</taxon>
    </lineage>
</organism>
<reference key="1">
    <citation type="submission" date="2007-11" db="EMBL/GenBank/DDBJ databases">
        <authorList>
            <consortium name="The Salmonella enterica serovar Paratyphi B Genome Sequencing Project"/>
            <person name="McClelland M."/>
            <person name="Sanderson E.K."/>
            <person name="Porwollik S."/>
            <person name="Spieth J."/>
            <person name="Clifton W.S."/>
            <person name="Fulton R."/>
            <person name="Cordes M."/>
            <person name="Wollam A."/>
            <person name="Shah N."/>
            <person name="Pepin K."/>
            <person name="Bhonagiri V."/>
            <person name="Nash W."/>
            <person name="Johnson M."/>
            <person name="Thiruvilangam P."/>
            <person name="Wilson R."/>
        </authorList>
    </citation>
    <scope>NUCLEOTIDE SEQUENCE [LARGE SCALE GENOMIC DNA]</scope>
    <source>
        <strain>ATCC BAA-1250 / SPB7</strain>
    </source>
</reference>
<feature type="chain" id="PRO_1000084281" description="Exoribonuclease 2">
    <location>
        <begin position="1"/>
        <end position="644"/>
    </location>
</feature>
<feature type="domain" description="RNB" evidence="1">
    <location>
        <begin position="189"/>
        <end position="516"/>
    </location>
</feature>
<feature type="domain" description="S1 motif" evidence="2">
    <location>
        <begin position="561"/>
        <end position="643"/>
    </location>
</feature>
<gene>
    <name evidence="2" type="primary">rnb</name>
    <name type="ordered locus">SPAB_01553</name>
</gene>
<keyword id="KW-0963">Cytoplasm</keyword>
<keyword id="KW-0269">Exonuclease</keyword>
<keyword id="KW-0378">Hydrolase</keyword>
<keyword id="KW-0540">Nuclease</keyword>
<keyword id="KW-0694">RNA-binding</keyword>
<name>RNB_SALPB</name>
<evidence type="ECO:0000255" key="1"/>
<evidence type="ECO:0000255" key="2">
    <source>
        <dbReference type="HAMAP-Rule" id="MF_01036"/>
    </source>
</evidence>
<comment type="function">
    <text evidence="2">Involved in mRNA degradation. Hydrolyzes single-stranded polyribonucleotides processively in the 3' to 5' direction.</text>
</comment>
<comment type="catalytic activity">
    <reaction evidence="2">
        <text>Exonucleolytic cleavage in the 3'- to 5'-direction to yield nucleoside 5'-phosphates.</text>
        <dbReference type="EC" id="3.1.13.1"/>
    </reaction>
</comment>
<comment type="subcellular location">
    <subcellularLocation>
        <location evidence="2">Cytoplasm</location>
    </subcellularLocation>
</comment>
<comment type="similarity">
    <text evidence="2">Belongs to the RNR ribonuclease family. RNase II subfamily.</text>
</comment>
<sequence>MFQDNPLLAQLKQQLHSQTPRAEGVVKATEKGFGFLEVDAQKSYFIPPPQMKKVMHGDRIVAVIHTEKERESAEPEELIEPFLTRFVGKVQGKNDRLSIVPDHPLLKDAIPCRAARGVQHEFKEGDWAVAEMRRHPLKGDRSFYADLTQYITFADDHFVPWWVTLARHNLEKEAPNGVATEMLDEGLERQDLTALNFVTIDSASTEDMDDALYAEELADGRLQLTVAIADPTAWIAEGSKLDNTAKIRAFTNYLPGFNIPMLPRELSDDLCSLRANEVRPALACRMIIAADGTIDDDIAFFAATIESKAKLAYDNVSDWLENNGTWQPDNEGIAQQIRLLHRICLSRSEWRHHHALVFKDRPDYRFVLGEKGEVLDIVAEPRRIANRIVEESMIAANLCAARVLRDKLGFGIYNVHTGFDPANADALAALLKTHGLHVDAEEVLTLEGFCKLRRELDAQPSGFLDSRIRRFQSFAEISTEPGPHFGLGLEAYATWTSPIRKYGDMINHRLLKAVIKGEAIARPQEDITQQMAERRRLNRMAERDVGDWLYARFLNDKAGTNTRFAAEIIDVSRGGMRVRLVDNGAIAFIPAPFLHAVRDELVCSQENGTVQIKGETVYKVTDVIDVTIAEVRMETRSIIARPAA</sequence>
<proteinExistence type="inferred from homology"/>
<protein>
    <recommendedName>
        <fullName evidence="2">Exoribonuclease 2</fullName>
        <ecNumber evidence="2">3.1.13.1</ecNumber>
    </recommendedName>
    <alternativeName>
        <fullName evidence="2">Exoribonuclease II</fullName>
        <shortName evidence="2">RNase II</shortName>
        <shortName evidence="2">Ribonuclease II</shortName>
    </alternativeName>
</protein>
<dbReference type="EC" id="3.1.13.1" evidence="2"/>
<dbReference type="EMBL" id="CP000886">
    <property type="protein sequence ID" value="ABX66951.1"/>
    <property type="molecule type" value="Genomic_DNA"/>
</dbReference>
<dbReference type="RefSeq" id="WP_000485055.1">
    <property type="nucleotide sequence ID" value="NC_010102.1"/>
</dbReference>
<dbReference type="SMR" id="A9MWU8"/>
<dbReference type="KEGG" id="spq:SPAB_01553"/>
<dbReference type="PATRIC" id="fig|1016998.12.peg.1459"/>
<dbReference type="HOGENOM" id="CLU_002333_7_3_6"/>
<dbReference type="BioCyc" id="SENT1016998:SPAB_RS06305-MONOMER"/>
<dbReference type="Proteomes" id="UP000008556">
    <property type="component" value="Chromosome"/>
</dbReference>
<dbReference type="GO" id="GO:0005829">
    <property type="term" value="C:cytosol"/>
    <property type="evidence" value="ECO:0007669"/>
    <property type="project" value="UniProtKB-ARBA"/>
</dbReference>
<dbReference type="GO" id="GO:0008859">
    <property type="term" value="F:exoribonuclease II activity"/>
    <property type="evidence" value="ECO:0007669"/>
    <property type="project" value="UniProtKB-UniRule"/>
</dbReference>
<dbReference type="GO" id="GO:0003723">
    <property type="term" value="F:RNA binding"/>
    <property type="evidence" value="ECO:0007669"/>
    <property type="project" value="UniProtKB-KW"/>
</dbReference>
<dbReference type="GO" id="GO:0006402">
    <property type="term" value="P:mRNA catabolic process"/>
    <property type="evidence" value="ECO:0007669"/>
    <property type="project" value="UniProtKB-UniRule"/>
</dbReference>
<dbReference type="FunFam" id="2.40.50.140:FF:000079">
    <property type="entry name" value="Exoribonuclease 2"/>
    <property type="match status" value="1"/>
</dbReference>
<dbReference type="FunFam" id="2.40.50.140:FF:000081">
    <property type="entry name" value="Exoribonuclease 2"/>
    <property type="match status" value="1"/>
</dbReference>
<dbReference type="FunFam" id="2.40.50.640:FF:000001">
    <property type="entry name" value="Exoribonuclease 2"/>
    <property type="match status" value="1"/>
</dbReference>
<dbReference type="Gene3D" id="2.40.50.640">
    <property type="match status" value="1"/>
</dbReference>
<dbReference type="Gene3D" id="2.40.50.140">
    <property type="entry name" value="Nucleic acid-binding proteins"/>
    <property type="match status" value="2"/>
</dbReference>
<dbReference type="HAMAP" id="MF_01036">
    <property type="entry name" value="RNase_II"/>
    <property type="match status" value="1"/>
</dbReference>
<dbReference type="InterPro" id="IPR011129">
    <property type="entry name" value="CSD"/>
</dbReference>
<dbReference type="InterPro" id="IPR012340">
    <property type="entry name" value="NA-bd_OB-fold"/>
</dbReference>
<dbReference type="InterPro" id="IPR013223">
    <property type="entry name" value="RNase_B_OB_dom"/>
</dbReference>
<dbReference type="InterPro" id="IPR011804">
    <property type="entry name" value="RNase_II"/>
</dbReference>
<dbReference type="InterPro" id="IPR001900">
    <property type="entry name" value="RNase_II/R"/>
</dbReference>
<dbReference type="InterPro" id="IPR022966">
    <property type="entry name" value="RNase_II/R_CS"/>
</dbReference>
<dbReference type="InterPro" id="IPR004476">
    <property type="entry name" value="RNase_II/RNase_R"/>
</dbReference>
<dbReference type="InterPro" id="IPR050180">
    <property type="entry name" value="RNR_Ribonuclease"/>
</dbReference>
<dbReference type="InterPro" id="IPR003029">
    <property type="entry name" value="S1_domain"/>
</dbReference>
<dbReference type="NCBIfam" id="TIGR00358">
    <property type="entry name" value="3_prime_RNase"/>
    <property type="match status" value="1"/>
</dbReference>
<dbReference type="NCBIfam" id="NF003455">
    <property type="entry name" value="PRK05054.1"/>
    <property type="match status" value="1"/>
</dbReference>
<dbReference type="NCBIfam" id="TIGR02062">
    <property type="entry name" value="RNase_B"/>
    <property type="match status" value="1"/>
</dbReference>
<dbReference type="PANTHER" id="PTHR23355:SF37">
    <property type="entry name" value="EXORIBONUCLEASE 2"/>
    <property type="match status" value="1"/>
</dbReference>
<dbReference type="PANTHER" id="PTHR23355">
    <property type="entry name" value="RIBONUCLEASE"/>
    <property type="match status" value="1"/>
</dbReference>
<dbReference type="Pfam" id="PF08206">
    <property type="entry name" value="OB_RNB"/>
    <property type="match status" value="1"/>
</dbReference>
<dbReference type="Pfam" id="PF00773">
    <property type="entry name" value="RNB"/>
    <property type="match status" value="1"/>
</dbReference>
<dbReference type="Pfam" id="PF00575">
    <property type="entry name" value="S1"/>
    <property type="match status" value="1"/>
</dbReference>
<dbReference type="SMART" id="SM00357">
    <property type="entry name" value="CSP"/>
    <property type="match status" value="1"/>
</dbReference>
<dbReference type="SMART" id="SM00955">
    <property type="entry name" value="RNB"/>
    <property type="match status" value="1"/>
</dbReference>
<dbReference type="SUPFAM" id="SSF50249">
    <property type="entry name" value="Nucleic acid-binding proteins"/>
    <property type="match status" value="4"/>
</dbReference>
<dbReference type="PROSITE" id="PS01175">
    <property type="entry name" value="RIBONUCLEASE_II"/>
    <property type="match status" value="1"/>
</dbReference>
<accession>A9MWU8</accession>